<organism>
    <name type="scientific">Streptococcus pyogenes serotype M49 (strain NZ131)</name>
    <dbReference type="NCBI Taxonomy" id="471876"/>
    <lineage>
        <taxon>Bacteria</taxon>
        <taxon>Bacillati</taxon>
        <taxon>Bacillota</taxon>
        <taxon>Bacilli</taxon>
        <taxon>Lactobacillales</taxon>
        <taxon>Streptococcaceae</taxon>
        <taxon>Streptococcus</taxon>
    </lineage>
</organism>
<name>Y946_STRPZ</name>
<proteinExistence type="inferred from homology"/>
<sequence length="113" mass="13590">MNIMEIEKTNRMNALFEFYAALLTDKQMNYIELYYADDYSLAEIADEFGVSRQAVYDNIKRTEKILETYEMKLHMYSDYVVRSEIFDDMIAHYPHDEYLQEKISILTSIDNRE</sequence>
<protein>
    <recommendedName>
        <fullName evidence="1">UPF0122 protein Spy49_0946c</fullName>
    </recommendedName>
</protein>
<evidence type="ECO:0000255" key="1">
    <source>
        <dbReference type="HAMAP-Rule" id="MF_00245"/>
    </source>
</evidence>
<feature type="chain" id="PRO_1000100820" description="UPF0122 protein Spy49_0946c">
    <location>
        <begin position="1"/>
        <end position="113"/>
    </location>
</feature>
<accession>B5XLN6</accession>
<reference key="1">
    <citation type="journal article" date="2008" name="J. Bacteriol.">
        <title>Genome sequence of a nephritogenic and highly transformable M49 strain of Streptococcus pyogenes.</title>
        <authorList>
            <person name="McShan W.M."/>
            <person name="Ferretti J.J."/>
            <person name="Karasawa T."/>
            <person name="Suvorov A.N."/>
            <person name="Lin S."/>
            <person name="Qin B."/>
            <person name="Jia H."/>
            <person name="Kenton S."/>
            <person name="Najar F."/>
            <person name="Wu H."/>
            <person name="Scott J."/>
            <person name="Roe B.A."/>
            <person name="Savic D.J."/>
        </authorList>
    </citation>
    <scope>NUCLEOTIDE SEQUENCE [LARGE SCALE GENOMIC DNA]</scope>
    <source>
        <strain>NZ131</strain>
    </source>
</reference>
<comment type="function">
    <text evidence="1">Might take part in the signal recognition particle (SRP) pathway. This is inferred from the conservation of its genetic proximity to ftsY/ffh. May be a regulatory protein.</text>
</comment>
<comment type="similarity">
    <text evidence="1">Belongs to the UPF0122 family.</text>
</comment>
<gene>
    <name type="ordered locus">Spy49_0946c</name>
</gene>
<dbReference type="EMBL" id="CP000829">
    <property type="protein sequence ID" value="ACI61248.1"/>
    <property type="molecule type" value="Genomic_DNA"/>
</dbReference>
<dbReference type="SMR" id="B5XLN6"/>
<dbReference type="KEGG" id="soz:Spy49_0946c"/>
<dbReference type="HOGENOM" id="CLU_129218_1_1_9"/>
<dbReference type="Proteomes" id="UP000001039">
    <property type="component" value="Chromosome"/>
</dbReference>
<dbReference type="Gene3D" id="1.10.10.10">
    <property type="entry name" value="Winged helix-like DNA-binding domain superfamily/Winged helix DNA-binding domain"/>
    <property type="match status" value="1"/>
</dbReference>
<dbReference type="HAMAP" id="MF_00245">
    <property type="entry name" value="UPF0122"/>
    <property type="match status" value="1"/>
</dbReference>
<dbReference type="InterPro" id="IPR013324">
    <property type="entry name" value="RNA_pol_sigma_r3/r4-like"/>
</dbReference>
<dbReference type="InterPro" id="IPR007394">
    <property type="entry name" value="UPF0122"/>
</dbReference>
<dbReference type="InterPro" id="IPR054831">
    <property type="entry name" value="UPF0122_fam_protein"/>
</dbReference>
<dbReference type="InterPro" id="IPR036388">
    <property type="entry name" value="WH-like_DNA-bd_sf"/>
</dbReference>
<dbReference type="NCBIfam" id="NF001066">
    <property type="entry name" value="PRK00118.1-1"/>
    <property type="match status" value="1"/>
</dbReference>
<dbReference type="NCBIfam" id="NF001068">
    <property type="entry name" value="PRK00118.1-4"/>
    <property type="match status" value="1"/>
</dbReference>
<dbReference type="NCBIfam" id="NF001070">
    <property type="entry name" value="PRK00118.1-6"/>
    <property type="match status" value="1"/>
</dbReference>
<dbReference type="NCBIfam" id="NF045758">
    <property type="entry name" value="YlxM"/>
    <property type="match status" value="1"/>
</dbReference>
<dbReference type="PANTHER" id="PTHR40083">
    <property type="entry name" value="UPF0122 PROTEIN CBO2450/CLC_2298"/>
    <property type="match status" value="1"/>
</dbReference>
<dbReference type="PANTHER" id="PTHR40083:SF1">
    <property type="entry name" value="UPF0122 PROTEIN YLXM"/>
    <property type="match status" value="1"/>
</dbReference>
<dbReference type="Pfam" id="PF04297">
    <property type="entry name" value="UPF0122"/>
    <property type="match status" value="1"/>
</dbReference>
<dbReference type="SUPFAM" id="SSF88659">
    <property type="entry name" value="Sigma3 and sigma4 domains of RNA polymerase sigma factors"/>
    <property type="match status" value="1"/>
</dbReference>